<organism>
    <name type="scientific">Bacillus cereus (strain Q1)</name>
    <dbReference type="NCBI Taxonomy" id="361100"/>
    <lineage>
        <taxon>Bacteria</taxon>
        <taxon>Bacillati</taxon>
        <taxon>Bacillota</taxon>
        <taxon>Bacilli</taxon>
        <taxon>Bacillales</taxon>
        <taxon>Bacillaceae</taxon>
        <taxon>Bacillus</taxon>
        <taxon>Bacillus cereus group</taxon>
    </lineage>
</organism>
<sequence>MAGRLDEDLKDVTLLGNQNTKYLFEYSPEILEVFDNNHPNRDYFVKFNCPEFTSLCPKTGQPDFATIYISYIPEQRMVESKSLKLYLFSFRNHGDFHEDCMNVIMNDLIKLMDPRYIEVWGKFTPRGGISIDPYCNYGRPGTKYEQMADYRMMNHDLYPETIDNR</sequence>
<gene>
    <name evidence="1" type="primary">queF</name>
    <name type="ordered locus">BCQ_1416</name>
</gene>
<reference key="1">
    <citation type="journal article" date="2009" name="J. Bacteriol.">
        <title>Complete genome sequence of the extremophilic Bacillus cereus strain Q1 with industrial applications.</title>
        <authorList>
            <person name="Xiong Z."/>
            <person name="Jiang Y."/>
            <person name="Qi D."/>
            <person name="Lu H."/>
            <person name="Yang F."/>
            <person name="Yang J."/>
            <person name="Chen L."/>
            <person name="Sun L."/>
            <person name="Xu X."/>
            <person name="Xue Y."/>
            <person name="Zhu Y."/>
            <person name="Jin Q."/>
        </authorList>
    </citation>
    <scope>NUCLEOTIDE SEQUENCE [LARGE SCALE GENOMIC DNA]</scope>
    <source>
        <strain>Q1</strain>
    </source>
</reference>
<name>QUEF_BACCQ</name>
<proteinExistence type="inferred from homology"/>
<keyword id="KW-0963">Cytoplasm</keyword>
<keyword id="KW-0521">NADP</keyword>
<keyword id="KW-0560">Oxidoreductase</keyword>
<keyword id="KW-0671">Queuosine biosynthesis</keyword>
<comment type="function">
    <text evidence="1">Catalyzes the NADPH-dependent reduction of 7-cyano-7-deazaguanine (preQ0) to 7-aminomethyl-7-deazaguanine (preQ1).</text>
</comment>
<comment type="catalytic activity">
    <reaction evidence="1">
        <text>7-aminomethyl-7-carbaguanine + 2 NADP(+) = 7-cyano-7-deazaguanine + 2 NADPH + 3 H(+)</text>
        <dbReference type="Rhea" id="RHEA:13409"/>
        <dbReference type="ChEBI" id="CHEBI:15378"/>
        <dbReference type="ChEBI" id="CHEBI:45075"/>
        <dbReference type="ChEBI" id="CHEBI:57783"/>
        <dbReference type="ChEBI" id="CHEBI:58349"/>
        <dbReference type="ChEBI" id="CHEBI:58703"/>
        <dbReference type="EC" id="1.7.1.13"/>
    </reaction>
</comment>
<comment type="pathway">
    <text evidence="1">tRNA modification; tRNA-queuosine biosynthesis.</text>
</comment>
<comment type="subcellular location">
    <subcellularLocation>
        <location evidence="1">Cytoplasm</location>
    </subcellularLocation>
</comment>
<comment type="similarity">
    <text evidence="1">Belongs to the GTP cyclohydrolase I family. QueF type 1 subfamily.</text>
</comment>
<protein>
    <recommendedName>
        <fullName evidence="1">NADPH-dependent 7-cyano-7-deazaguanine reductase</fullName>
        <ecNumber evidence="1">1.7.1.13</ecNumber>
    </recommendedName>
    <alternativeName>
        <fullName evidence="1">7-cyano-7-carbaguanine reductase</fullName>
    </alternativeName>
    <alternativeName>
        <fullName evidence="1">NADPH-dependent nitrile oxidoreductase</fullName>
    </alternativeName>
    <alternativeName>
        <fullName evidence="1">PreQ(0) reductase</fullName>
    </alternativeName>
</protein>
<feature type="chain" id="PRO_1000148667" description="NADPH-dependent 7-cyano-7-deazaguanine reductase">
    <location>
        <begin position="1"/>
        <end position="165"/>
    </location>
</feature>
<feature type="active site" description="Thioimide intermediate" evidence="1">
    <location>
        <position position="56"/>
    </location>
</feature>
<feature type="active site" description="Proton donor" evidence="1">
    <location>
        <position position="63"/>
    </location>
</feature>
<feature type="binding site" evidence="1">
    <location>
        <begin position="78"/>
        <end position="80"/>
    </location>
    <ligand>
        <name>substrate</name>
    </ligand>
</feature>
<feature type="binding site" evidence="1">
    <location>
        <begin position="97"/>
        <end position="98"/>
    </location>
    <ligand>
        <name>substrate</name>
    </ligand>
</feature>
<accession>B9IUT3</accession>
<evidence type="ECO:0000255" key="1">
    <source>
        <dbReference type="HAMAP-Rule" id="MF_00818"/>
    </source>
</evidence>
<dbReference type="EC" id="1.7.1.13" evidence="1"/>
<dbReference type="EMBL" id="CP000227">
    <property type="protein sequence ID" value="ACM11844.1"/>
    <property type="molecule type" value="Genomic_DNA"/>
</dbReference>
<dbReference type="SMR" id="B9IUT3"/>
<dbReference type="KEGG" id="bcq:BCQ_1416"/>
<dbReference type="HOGENOM" id="CLU_102489_0_1_9"/>
<dbReference type="UniPathway" id="UPA00392"/>
<dbReference type="Proteomes" id="UP000000441">
    <property type="component" value="Chromosome"/>
</dbReference>
<dbReference type="GO" id="GO:0005737">
    <property type="term" value="C:cytoplasm"/>
    <property type="evidence" value="ECO:0007669"/>
    <property type="project" value="UniProtKB-SubCell"/>
</dbReference>
<dbReference type="GO" id="GO:0033739">
    <property type="term" value="F:preQ1 synthase activity"/>
    <property type="evidence" value="ECO:0007669"/>
    <property type="project" value="UniProtKB-UniRule"/>
</dbReference>
<dbReference type="GO" id="GO:0008616">
    <property type="term" value="P:queuosine biosynthetic process"/>
    <property type="evidence" value="ECO:0007669"/>
    <property type="project" value="UniProtKB-UniRule"/>
</dbReference>
<dbReference type="GO" id="GO:0006400">
    <property type="term" value="P:tRNA modification"/>
    <property type="evidence" value="ECO:0007669"/>
    <property type="project" value="UniProtKB-UniRule"/>
</dbReference>
<dbReference type="Gene3D" id="3.30.1130.10">
    <property type="match status" value="1"/>
</dbReference>
<dbReference type="HAMAP" id="MF_00818">
    <property type="entry name" value="QueF_type1"/>
    <property type="match status" value="1"/>
</dbReference>
<dbReference type="InterPro" id="IPR043133">
    <property type="entry name" value="GTP-CH-I_C/QueF"/>
</dbReference>
<dbReference type="InterPro" id="IPR050084">
    <property type="entry name" value="NADPH_dep_7-cyano-7-deazaG_red"/>
</dbReference>
<dbReference type="InterPro" id="IPR029500">
    <property type="entry name" value="QueF"/>
</dbReference>
<dbReference type="InterPro" id="IPR016856">
    <property type="entry name" value="QueF_type1"/>
</dbReference>
<dbReference type="NCBIfam" id="TIGR03139">
    <property type="entry name" value="QueF-II"/>
    <property type="match status" value="1"/>
</dbReference>
<dbReference type="PANTHER" id="PTHR34354">
    <property type="entry name" value="NADPH-DEPENDENT 7-CYANO-7-DEAZAGUANINE REDUCTASE"/>
    <property type="match status" value="1"/>
</dbReference>
<dbReference type="PANTHER" id="PTHR34354:SF1">
    <property type="entry name" value="NADPH-DEPENDENT 7-CYANO-7-DEAZAGUANINE REDUCTASE"/>
    <property type="match status" value="1"/>
</dbReference>
<dbReference type="Pfam" id="PF14489">
    <property type="entry name" value="QueF"/>
    <property type="match status" value="1"/>
</dbReference>
<dbReference type="PIRSF" id="PIRSF027377">
    <property type="entry name" value="Nitrile_oxidored_QueF"/>
    <property type="match status" value="1"/>
</dbReference>
<dbReference type="SUPFAM" id="SSF55620">
    <property type="entry name" value="Tetrahydrobiopterin biosynthesis enzymes-like"/>
    <property type="match status" value="1"/>
</dbReference>